<sequence>MKRTFQPSVLKRNRSHGFRARMATKNGRQVLARRRAKGRARLTVSK</sequence>
<protein>
    <recommendedName>
        <fullName evidence="1">Large ribosomal subunit protein bL34</fullName>
    </recommendedName>
    <alternativeName>
        <fullName evidence="2">50S ribosomal protein L34</fullName>
    </alternativeName>
</protein>
<accession>A7ZTQ9</accession>
<dbReference type="EMBL" id="CP000800">
    <property type="protein sequence ID" value="ABV19159.1"/>
    <property type="molecule type" value="Genomic_DNA"/>
</dbReference>
<dbReference type="RefSeq" id="WP_000831330.1">
    <property type="nucleotide sequence ID" value="NC_009801.1"/>
</dbReference>
<dbReference type="SMR" id="A7ZTQ9"/>
<dbReference type="GeneID" id="98190980"/>
<dbReference type="KEGG" id="ecw:EcE24377A_4213"/>
<dbReference type="HOGENOM" id="CLU_129938_2_1_6"/>
<dbReference type="Proteomes" id="UP000001122">
    <property type="component" value="Chromosome"/>
</dbReference>
<dbReference type="GO" id="GO:1990904">
    <property type="term" value="C:ribonucleoprotein complex"/>
    <property type="evidence" value="ECO:0007669"/>
    <property type="project" value="UniProtKB-KW"/>
</dbReference>
<dbReference type="GO" id="GO:0005840">
    <property type="term" value="C:ribosome"/>
    <property type="evidence" value="ECO:0007669"/>
    <property type="project" value="UniProtKB-KW"/>
</dbReference>
<dbReference type="GO" id="GO:0003735">
    <property type="term" value="F:structural constituent of ribosome"/>
    <property type="evidence" value="ECO:0007669"/>
    <property type="project" value="InterPro"/>
</dbReference>
<dbReference type="GO" id="GO:0006412">
    <property type="term" value="P:translation"/>
    <property type="evidence" value="ECO:0007669"/>
    <property type="project" value="UniProtKB-UniRule"/>
</dbReference>
<dbReference type="FunFam" id="1.10.287.3980:FF:000001">
    <property type="entry name" value="Mitochondrial ribosomal protein L34"/>
    <property type="match status" value="1"/>
</dbReference>
<dbReference type="Gene3D" id="1.10.287.3980">
    <property type="match status" value="1"/>
</dbReference>
<dbReference type="HAMAP" id="MF_00391">
    <property type="entry name" value="Ribosomal_bL34"/>
    <property type="match status" value="1"/>
</dbReference>
<dbReference type="InterPro" id="IPR000271">
    <property type="entry name" value="Ribosomal_bL34"/>
</dbReference>
<dbReference type="InterPro" id="IPR020939">
    <property type="entry name" value="Ribosomal_bL34_CS"/>
</dbReference>
<dbReference type="NCBIfam" id="TIGR01030">
    <property type="entry name" value="rpmH_bact"/>
    <property type="match status" value="1"/>
</dbReference>
<dbReference type="PANTHER" id="PTHR14503:SF4">
    <property type="entry name" value="LARGE RIBOSOMAL SUBUNIT PROTEIN BL34M"/>
    <property type="match status" value="1"/>
</dbReference>
<dbReference type="PANTHER" id="PTHR14503">
    <property type="entry name" value="MITOCHONDRIAL RIBOSOMAL PROTEIN 34 FAMILY MEMBER"/>
    <property type="match status" value="1"/>
</dbReference>
<dbReference type="Pfam" id="PF00468">
    <property type="entry name" value="Ribosomal_L34"/>
    <property type="match status" value="1"/>
</dbReference>
<dbReference type="PROSITE" id="PS00784">
    <property type="entry name" value="RIBOSOMAL_L34"/>
    <property type="match status" value="1"/>
</dbReference>
<keyword id="KW-1185">Reference proteome</keyword>
<keyword id="KW-0687">Ribonucleoprotein</keyword>
<keyword id="KW-0689">Ribosomal protein</keyword>
<feature type="chain" id="PRO_1000060754" description="Large ribosomal subunit protein bL34">
    <location>
        <begin position="1"/>
        <end position="46"/>
    </location>
</feature>
<organism>
    <name type="scientific">Escherichia coli O139:H28 (strain E24377A / ETEC)</name>
    <dbReference type="NCBI Taxonomy" id="331111"/>
    <lineage>
        <taxon>Bacteria</taxon>
        <taxon>Pseudomonadati</taxon>
        <taxon>Pseudomonadota</taxon>
        <taxon>Gammaproteobacteria</taxon>
        <taxon>Enterobacterales</taxon>
        <taxon>Enterobacteriaceae</taxon>
        <taxon>Escherichia</taxon>
    </lineage>
</organism>
<reference key="1">
    <citation type="journal article" date="2008" name="J. Bacteriol.">
        <title>The pangenome structure of Escherichia coli: comparative genomic analysis of E. coli commensal and pathogenic isolates.</title>
        <authorList>
            <person name="Rasko D.A."/>
            <person name="Rosovitz M.J."/>
            <person name="Myers G.S.A."/>
            <person name="Mongodin E.F."/>
            <person name="Fricke W.F."/>
            <person name="Gajer P."/>
            <person name="Crabtree J."/>
            <person name="Sebaihia M."/>
            <person name="Thomson N.R."/>
            <person name="Chaudhuri R."/>
            <person name="Henderson I.R."/>
            <person name="Sperandio V."/>
            <person name="Ravel J."/>
        </authorList>
    </citation>
    <scope>NUCLEOTIDE SEQUENCE [LARGE SCALE GENOMIC DNA]</scope>
    <source>
        <strain>E24377A / ETEC</strain>
    </source>
</reference>
<evidence type="ECO:0000255" key="1">
    <source>
        <dbReference type="HAMAP-Rule" id="MF_00391"/>
    </source>
</evidence>
<evidence type="ECO:0000305" key="2"/>
<name>RL34_ECO24</name>
<gene>
    <name evidence="1" type="primary">rpmH</name>
    <name type="ordered locus">EcE24377A_4213</name>
</gene>
<comment type="similarity">
    <text evidence="1">Belongs to the bacterial ribosomal protein bL34 family.</text>
</comment>
<proteinExistence type="inferred from homology"/>